<protein>
    <recommendedName>
        <fullName evidence="2">Formamidopyrimidine-DNA glycosylase</fullName>
        <shortName evidence="2">Fapy-DNA glycosylase</shortName>
        <ecNumber evidence="2">3.2.2.23</ecNumber>
    </recommendedName>
    <alternativeName>
        <fullName evidence="2">DNA-(apurinic or apyrimidinic site) lyase MutM</fullName>
        <shortName evidence="2">AP lyase MutM</shortName>
        <ecNumber evidence="2">4.2.99.18</ecNumber>
    </alternativeName>
</protein>
<name>FPG_HAEI8</name>
<gene>
    <name evidence="2" type="primary">mutM</name>
    <name evidence="2" type="synonym">fpg</name>
    <name type="ordered locus">NTHI1118</name>
</gene>
<accession>Q4QLW2</accession>
<reference key="1">
    <citation type="journal article" date="2005" name="J. Bacteriol.">
        <title>Genomic sequence of an otitis media isolate of nontypeable Haemophilus influenzae: comparative study with H. influenzae serotype d, strain KW20.</title>
        <authorList>
            <person name="Harrison A."/>
            <person name="Dyer D.W."/>
            <person name="Gillaspy A."/>
            <person name="Ray W.C."/>
            <person name="Mungur R."/>
            <person name="Carson M.B."/>
            <person name="Zhong H."/>
            <person name="Gipson J."/>
            <person name="Gipson M."/>
            <person name="Johnson L.S."/>
            <person name="Lewis L."/>
            <person name="Bakaletz L.O."/>
            <person name="Munson R.S. Jr."/>
        </authorList>
    </citation>
    <scope>NUCLEOTIDE SEQUENCE [LARGE SCALE GENOMIC DNA]</scope>
    <source>
        <strain>86-028NP</strain>
    </source>
</reference>
<evidence type="ECO:0000250" key="1"/>
<evidence type="ECO:0000255" key="2">
    <source>
        <dbReference type="HAMAP-Rule" id="MF_00103"/>
    </source>
</evidence>
<feature type="initiator methionine" description="Removed" evidence="1">
    <location>
        <position position="1"/>
    </location>
</feature>
<feature type="chain" id="PRO_0000228438" description="Formamidopyrimidine-DNA glycosylase">
    <location>
        <begin position="2"/>
        <end position="271"/>
    </location>
</feature>
<feature type="zinc finger region" description="FPG-type" evidence="2">
    <location>
        <begin position="235"/>
        <end position="269"/>
    </location>
</feature>
<feature type="active site" description="Schiff-base intermediate with DNA" evidence="2">
    <location>
        <position position="2"/>
    </location>
</feature>
<feature type="active site" description="Proton donor" evidence="2">
    <location>
        <position position="3"/>
    </location>
</feature>
<feature type="active site" description="Proton donor; for beta-elimination activity" evidence="2">
    <location>
        <position position="57"/>
    </location>
</feature>
<feature type="active site" description="Proton donor; for delta-elimination activity" evidence="2">
    <location>
        <position position="259"/>
    </location>
</feature>
<feature type="binding site" evidence="2">
    <location>
        <position position="90"/>
    </location>
    <ligand>
        <name>DNA</name>
        <dbReference type="ChEBI" id="CHEBI:16991"/>
    </ligand>
</feature>
<feature type="binding site" evidence="2">
    <location>
        <position position="109"/>
    </location>
    <ligand>
        <name>DNA</name>
        <dbReference type="ChEBI" id="CHEBI:16991"/>
    </ligand>
</feature>
<feature type="binding site" evidence="2">
    <location>
        <position position="150"/>
    </location>
    <ligand>
        <name>DNA</name>
        <dbReference type="ChEBI" id="CHEBI:16991"/>
    </ligand>
</feature>
<comment type="function">
    <text evidence="2">Involved in base excision repair of DNA damaged by oxidation or by mutagenic agents. Acts as a DNA glycosylase that recognizes and removes damaged bases. Has a preference for oxidized purines, such as 7,8-dihydro-8-oxoguanine (8-oxoG). Has AP (apurinic/apyrimidinic) lyase activity and introduces nicks in the DNA strand. Cleaves the DNA backbone by beta-delta elimination to generate a single-strand break at the site of the removed base with both 3'- and 5'-phosphates.</text>
</comment>
<comment type="catalytic activity">
    <reaction evidence="2">
        <text>Hydrolysis of DNA containing ring-opened 7-methylguanine residues, releasing 2,6-diamino-4-hydroxy-5-(N-methyl)formamidopyrimidine.</text>
        <dbReference type="EC" id="3.2.2.23"/>
    </reaction>
</comment>
<comment type="catalytic activity">
    <reaction evidence="2">
        <text>2'-deoxyribonucleotide-(2'-deoxyribose 5'-phosphate)-2'-deoxyribonucleotide-DNA = a 3'-end 2'-deoxyribonucleotide-(2,3-dehydro-2,3-deoxyribose 5'-phosphate)-DNA + a 5'-end 5'-phospho-2'-deoxyribonucleoside-DNA + H(+)</text>
        <dbReference type="Rhea" id="RHEA:66592"/>
        <dbReference type="Rhea" id="RHEA-COMP:13180"/>
        <dbReference type="Rhea" id="RHEA-COMP:16897"/>
        <dbReference type="Rhea" id="RHEA-COMP:17067"/>
        <dbReference type="ChEBI" id="CHEBI:15378"/>
        <dbReference type="ChEBI" id="CHEBI:136412"/>
        <dbReference type="ChEBI" id="CHEBI:157695"/>
        <dbReference type="ChEBI" id="CHEBI:167181"/>
        <dbReference type="EC" id="4.2.99.18"/>
    </reaction>
</comment>
<comment type="cofactor">
    <cofactor evidence="2">
        <name>Zn(2+)</name>
        <dbReference type="ChEBI" id="CHEBI:29105"/>
    </cofactor>
    <text evidence="2">Binds 1 zinc ion per subunit.</text>
</comment>
<comment type="subunit">
    <text evidence="2">Monomer.</text>
</comment>
<comment type="similarity">
    <text evidence="2">Belongs to the FPG family.</text>
</comment>
<proteinExistence type="inferred from homology"/>
<sequence length="271" mass="30742">MPELPEVETALRGISPYLKNFTIEKVVVRKPKLRWAVSEELITLKNVKIVDLTRRAKYLIIHTEKGYIIGHLGMSGSVRIVPQDSAIDKHDHIDIVVNNGKLLRYNDPRRFGAWLWTENLDDFHLFLKLGPEPLSDEFNAEYLFKKSRQKSTALKTFLMDNAVVVGVGNIYANESLFICGIHPLKLAKNLTRNQCFSLVNTIKDVLRKAIIQGGTTLKDFLQPDGRPGYFAQELLVYGNKDKPCPKCGGKIESLIIGQRNSFFCPKCQKRG</sequence>
<dbReference type="EC" id="3.2.2.23" evidence="2"/>
<dbReference type="EC" id="4.2.99.18" evidence="2"/>
<dbReference type="EMBL" id="CP000057">
    <property type="protein sequence ID" value="AAX87985.1"/>
    <property type="molecule type" value="Genomic_DNA"/>
</dbReference>
<dbReference type="RefSeq" id="WP_011272305.1">
    <property type="nucleotide sequence ID" value="NC_007146.2"/>
</dbReference>
<dbReference type="SMR" id="Q4QLW2"/>
<dbReference type="GeneID" id="93219984"/>
<dbReference type="KEGG" id="hit:NTHI1118"/>
<dbReference type="HOGENOM" id="CLU_038423_1_1_6"/>
<dbReference type="Proteomes" id="UP000002525">
    <property type="component" value="Chromosome"/>
</dbReference>
<dbReference type="GO" id="GO:0034039">
    <property type="term" value="F:8-oxo-7,8-dihydroguanine DNA N-glycosylase activity"/>
    <property type="evidence" value="ECO:0007669"/>
    <property type="project" value="TreeGrafter"/>
</dbReference>
<dbReference type="GO" id="GO:0140078">
    <property type="term" value="F:class I DNA-(apurinic or apyrimidinic site) endonuclease activity"/>
    <property type="evidence" value="ECO:0007669"/>
    <property type="project" value="UniProtKB-EC"/>
</dbReference>
<dbReference type="GO" id="GO:0003684">
    <property type="term" value="F:damaged DNA binding"/>
    <property type="evidence" value="ECO:0007669"/>
    <property type="project" value="InterPro"/>
</dbReference>
<dbReference type="GO" id="GO:0008270">
    <property type="term" value="F:zinc ion binding"/>
    <property type="evidence" value="ECO:0007669"/>
    <property type="project" value="UniProtKB-UniRule"/>
</dbReference>
<dbReference type="GO" id="GO:0006284">
    <property type="term" value="P:base-excision repair"/>
    <property type="evidence" value="ECO:0007669"/>
    <property type="project" value="InterPro"/>
</dbReference>
<dbReference type="CDD" id="cd08966">
    <property type="entry name" value="EcFpg-like_N"/>
    <property type="match status" value="1"/>
</dbReference>
<dbReference type="FunFam" id="1.10.8.50:FF:000003">
    <property type="entry name" value="Formamidopyrimidine-DNA glycosylase"/>
    <property type="match status" value="1"/>
</dbReference>
<dbReference type="FunFam" id="3.20.190.10:FF:000001">
    <property type="entry name" value="Formamidopyrimidine-DNA glycosylase"/>
    <property type="match status" value="1"/>
</dbReference>
<dbReference type="Gene3D" id="1.10.8.50">
    <property type="match status" value="1"/>
</dbReference>
<dbReference type="Gene3D" id="3.20.190.10">
    <property type="entry name" value="MutM-like, N-terminal"/>
    <property type="match status" value="1"/>
</dbReference>
<dbReference type="HAMAP" id="MF_00103">
    <property type="entry name" value="Fapy_DNA_glycosyl"/>
    <property type="match status" value="1"/>
</dbReference>
<dbReference type="InterPro" id="IPR015886">
    <property type="entry name" value="DNA_glyclase/AP_lyase_DNA-bd"/>
</dbReference>
<dbReference type="InterPro" id="IPR015887">
    <property type="entry name" value="DNA_glyclase_Znf_dom_DNA_BS"/>
</dbReference>
<dbReference type="InterPro" id="IPR020629">
    <property type="entry name" value="Formamido-pyr_DNA_Glyclase"/>
</dbReference>
<dbReference type="InterPro" id="IPR012319">
    <property type="entry name" value="FPG_cat"/>
</dbReference>
<dbReference type="InterPro" id="IPR035937">
    <property type="entry name" value="MutM-like_N-ter"/>
</dbReference>
<dbReference type="InterPro" id="IPR010979">
    <property type="entry name" value="Ribosomal_uS13-like_H2TH"/>
</dbReference>
<dbReference type="InterPro" id="IPR000214">
    <property type="entry name" value="Znf_DNA_glyclase/AP_lyase"/>
</dbReference>
<dbReference type="InterPro" id="IPR010663">
    <property type="entry name" value="Znf_FPG/IleRS"/>
</dbReference>
<dbReference type="NCBIfam" id="TIGR00577">
    <property type="entry name" value="fpg"/>
    <property type="match status" value="1"/>
</dbReference>
<dbReference type="NCBIfam" id="NF002211">
    <property type="entry name" value="PRK01103.1"/>
    <property type="match status" value="1"/>
</dbReference>
<dbReference type="PANTHER" id="PTHR22993">
    <property type="entry name" value="FORMAMIDOPYRIMIDINE-DNA GLYCOSYLASE"/>
    <property type="match status" value="1"/>
</dbReference>
<dbReference type="PANTHER" id="PTHR22993:SF9">
    <property type="entry name" value="FORMAMIDOPYRIMIDINE-DNA GLYCOSYLASE"/>
    <property type="match status" value="1"/>
</dbReference>
<dbReference type="Pfam" id="PF01149">
    <property type="entry name" value="Fapy_DNA_glyco"/>
    <property type="match status" value="1"/>
</dbReference>
<dbReference type="Pfam" id="PF06831">
    <property type="entry name" value="H2TH"/>
    <property type="match status" value="1"/>
</dbReference>
<dbReference type="Pfam" id="PF06827">
    <property type="entry name" value="zf-FPG_IleRS"/>
    <property type="match status" value="1"/>
</dbReference>
<dbReference type="SMART" id="SM00898">
    <property type="entry name" value="Fapy_DNA_glyco"/>
    <property type="match status" value="1"/>
</dbReference>
<dbReference type="SMART" id="SM01232">
    <property type="entry name" value="H2TH"/>
    <property type="match status" value="1"/>
</dbReference>
<dbReference type="SUPFAM" id="SSF57716">
    <property type="entry name" value="Glucocorticoid receptor-like (DNA-binding domain)"/>
    <property type="match status" value="1"/>
</dbReference>
<dbReference type="SUPFAM" id="SSF81624">
    <property type="entry name" value="N-terminal domain of MutM-like DNA repair proteins"/>
    <property type="match status" value="1"/>
</dbReference>
<dbReference type="SUPFAM" id="SSF46946">
    <property type="entry name" value="S13-like H2TH domain"/>
    <property type="match status" value="1"/>
</dbReference>
<dbReference type="PROSITE" id="PS51068">
    <property type="entry name" value="FPG_CAT"/>
    <property type="match status" value="1"/>
</dbReference>
<dbReference type="PROSITE" id="PS01242">
    <property type="entry name" value="ZF_FPG_1"/>
    <property type="match status" value="1"/>
</dbReference>
<dbReference type="PROSITE" id="PS51066">
    <property type="entry name" value="ZF_FPG_2"/>
    <property type="match status" value="1"/>
</dbReference>
<organism>
    <name type="scientific">Haemophilus influenzae (strain 86-028NP)</name>
    <dbReference type="NCBI Taxonomy" id="281310"/>
    <lineage>
        <taxon>Bacteria</taxon>
        <taxon>Pseudomonadati</taxon>
        <taxon>Pseudomonadota</taxon>
        <taxon>Gammaproteobacteria</taxon>
        <taxon>Pasteurellales</taxon>
        <taxon>Pasteurellaceae</taxon>
        <taxon>Haemophilus</taxon>
    </lineage>
</organism>
<keyword id="KW-0227">DNA damage</keyword>
<keyword id="KW-0234">DNA repair</keyword>
<keyword id="KW-0238">DNA-binding</keyword>
<keyword id="KW-0326">Glycosidase</keyword>
<keyword id="KW-0378">Hydrolase</keyword>
<keyword id="KW-0456">Lyase</keyword>
<keyword id="KW-0479">Metal-binding</keyword>
<keyword id="KW-0511">Multifunctional enzyme</keyword>
<keyword id="KW-0862">Zinc</keyword>
<keyword id="KW-0863">Zinc-finger</keyword>